<sequence>MGKGASNKKVLERVPITKPPFEYNDLKKAVPPHCFSRPLFRSFYFLLHDIIVTCILFYVASNYIPMLPGFLSYIVWPVYWISQGVFLGRLWMIGHECGHHSFSNYRWVDDSVGFLIHTATLTPYFSFKYSHRNHHAHTNSMEYDEVHIPKRKSEALDLYFEFLGNNPMGLMITMLCKLTFGYAAYIMFNYTGKKHKSGGLASHFYPQSPLFNDSERNHVLFSDVGICIVLYACYRIVMVTGAMSAFYVYGIPWVIMSAILFAATYLQHTHPSIPHYDTTEWNWLRGALSTIDRDLGFFNMNKTHYHVIHHLFPVIPEYHAQEATEAIKPILGQYYKYDGTPFLKALWREMKDCIYVESDQGQKKQGIYWFKNKI</sequence>
<gene>
    <name evidence="6" type="primary">FAC2A</name>
</gene>
<name>FAC2A_CALOF</name>
<accession>Q9FPP8</accession>
<reference key="1">
    <citation type="journal article" date="2001" name="J. Biol. Chem.">
        <title>Formation of conjugated delta8,delta10-double bonds by delta12-oleic-acid desaturase-related enzymes: biosynthetic origin of calendic acid.</title>
        <authorList>
            <person name="Cahoon E.B."/>
            <person name="Ripp K.G."/>
            <person name="Hall S.E."/>
            <person name="Kinney A.J."/>
        </authorList>
    </citation>
    <scope>NUCLEOTIDE SEQUENCE [MRNA]</scope>
    <scope>FUNCTION</scope>
    <scope>CATALYTIC ACTIVITY</scope>
    <scope>TISSUE SPECIFICITY</scope>
    <scope>SUBCELLULAR LOCATION</scope>
</reference>
<reference key="2">
    <citation type="journal article" date="2001" name="Plant Physiol.">
        <title>Identification and analysis of a gene from Calendula officinalis encoding a fatty acid conjugase.</title>
        <authorList>
            <person name="Qiu X."/>
            <person name="Reed D.W."/>
            <person name="Hong H."/>
            <person name="MacKenzie S.L."/>
            <person name="Covello P.S."/>
        </authorList>
    </citation>
    <scope>NUCLEOTIDE SEQUENCE [MRNA]</scope>
    <scope>FUNCTION</scope>
    <scope>CATALYTIC ACTIVITY</scope>
    <scope>TISSUE SPECIFICITY</scope>
</reference>
<reference key="3">
    <citation type="journal article" date="2002" name="Eur. J. Biochem.">
        <title>Mechanism of 1,4-dehydrogenation catalyzed by a fatty acid (1,4)-desaturase of Calendula officinalis.</title>
        <authorList>
            <person name="Reed D.W."/>
            <person name="Savile C.K."/>
            <person name="Qiu X."/>
            <person name="Buist P.H."/>
            <person name="Covello P.S."/>
        </authorList>
    </citation>
    <scope>FUNCTION</scope>
    <scope>CATALYTIC ACTIVITY</scope>
</reference>
<feature type="chain" id="PRO_0000435418" description="Fatty acid conjugase FAC2 A">
    <location>
        <begin position="1"/>
        <end position="374"/>
    </location>
</feature>
<feature type="transmembrane region" description="Helical" evidence="1">
    <location>
        <begin position="50"/>
        <end position="70"/>
    </location>
</feature>
<feature type="transmembrane region" description="Helical" evidence="1">
    <location>
        <begin position="74"/>
        <end position="94"/>
    </location>
</feature>
<feature type="transmembrane region" description="Helical" evidence="1">
    <location>
        <begin position="168"/>
        <end position="188"/>
    </location>
</feature>
<feature type="transmembrane region" description="Helical" evidence="1">
    <location>
        <begin position="219"/>
        <end position="239"/>
    </location>
</feature>
<feature type="transmembrane region" description="Helical" evidence="1">
    <location>
        <begin position="246"/>
        <end position="266"/>
    </location>
</feature>
<feature type="short sequence motif" description="Histidine box-1" evidence="7">
    <location>
        <begin position="95"/>
        <end position="99"/>
    </location>
</feature>
<feature type="short sequence motif" description="Histidine box-2" evidence="7">
    <location>
        <begin position="131"/>
        <end position="135"/>
    </location>
</feature>
<feature type="short sequence motif" description="Histidine box-3" evidence="7">
    <location>
        <begin position="306"/>
        <end position="310"/>
    </location>
</feature>
<proteinExistence type="evidence at protein level"/>
<dbReference type="EC" id="1.14.19.14" evidence="2 3 4"/>
<dbReference type="EMBL" id="AF310155">
    <property type="protein sequence ID" value="AAG42259.1"/>
    <property type="molecule type" value="mRNA"/>
</dbReference>
<dbReference type="EMBL" id="AF343064">
    <property type="protein sequence ID" value="AAK26632.1"/>
    <property type="molecule type" value="mRNA"/>
</dbReference>
<dbReference type="KEGG" id="ag:AAG42259"/>
<dbReference type="BRENDA" id="1.14.19.14">
    <property type="organism ID" value="13728"/>
</dbReference>
<dbReference type="UniPathway" id="UPA00658"/>
<dbReference type="GO" id="GO:0005783">
    <property type="term" value="C:endoplasmic reticulum"/>
    <property type="evidence" value="ECO:0007669"/>
    <property type="project" value="UniProtKB-KW"/>
</dbReference>
<dbReference type="GO" id="GO:0016020">
    <property type="term" value="C:membrane"/>
    <property type="evidence" value="ECO:0000314"/>
    <property type="project" value="UniProtKB"/>
</dbReference>
<dbReference type="GO" id="GO:0016717">
    <property type="term" value="F:oxidoreductase activity, acting on paired donors, with oxidation of a pair of donors resulting in the reduction of molecular oxygen to two molecules of water"/>
    <property type="evidence" value="ECO:0000314"/>
    <property type="project" value="UniProtKB"/>
</dbReference>
<dbReference type="GO" id="GO:0036109">
    <property type="term" value="P:alpha-linolenic acid metabolic process"/>
    <property type="evidence" value="ECO:0000314"/>
    <property type="project" value="UniProtKB"/>
</dbReference>
<dbReference type="GO" id="GO:0006636">
    <property type="term" value="P:unsaturated fatty acid biosynthetic process"/>
    <property type="evidence" value="ECO:0000314"/>
    <property type="project" value="UniProtKB"/>
</dbReference>
<dbReference type="CDD" id="cd03507">
    <property type="entry name" value="Delta12-FADS-like"/>
    <property type="match status" value="1"/>
</dbReference>
<dbReference type="InterPro" id="IPR005804">
    <property type="entry name" value="FA_desaturase_dom"/>
</dbReference>
<dbReference type="InterPro" id="IPR012171">
    <property type="entry name" value="Fatty_acid_desaturase"/>
</dbReference>
<dbReference type="PANTHER" id="PTHR32100">
    <property type="entry name" value="OMEGA-6 FATTY ACID DESATURASE, CHLOROPLASTIC"/>
    <property type="match status" value="1"/>
</dbReference>
<dbReference type="Pfam" id="PF00487">
    <property type="entry name" value="FA_desaturase"/>
    <property type="match status" value="1"/>
</dbReference>
<organism evidence="8">
    <name type="scientific">Calendula officinalis</name>
    <name type="common">Pot marigold</name>
    <dbReference type="NCBI Taxonomy" id="41496"/>
    <lineage>
        <taxon>Eukaryota</taxon>
        <taxon>Viridiplantae</taxon>
        <taxon>Streptophyta</taxon>
        <taxon>Embryophyta</taxon>
        <taxon>Tracheophyta</taxon>
        <taxon>Spermatophyta</taxon>
        <taxon>Magnoliopsida</taxon>
        <taxon>eudicotyledons</taxon>
        <taxon>Gunneridae</taxon>
        <taxon>Pentapetalae</taxon>
        <taxon>asterids</taxon>
        <taxon>campanulids</taxon>
        <taxon>Asterales</taxon>
        <taxon>Asteraceae</taxon>
        <taxon>Asteroideae</taxon>
        <taxon>Calenduleae</taxon>
        <taxon>Calendula</taxon>
    </lineage>
</organism>
<evidence type="ECO:0000255" key="1"/>
<evidence type="ECO:0000269" key="2">
    <source>
    </source>
</evidence>
<evidence type="ECO:0000269" key="3">
    <source>
    </source>
</evidence>
<evidence type="ECO:0000269" key="4">
    <source>
    </source>
</evidence>
<evidence type="ECO:0000303" key="5">
    <source>
    </source>
</evidence>
<evidence type="ECO:0000303" key="6">
    <source>
    </source>
</evidence>
<evidence type="ECO:0000305" key="7"/>
<evidence type="ECO:0000312" key="8">
    <source>
        <dbReference type="EMBL" id="AAG42259.1"/>
    </source>
</evidence>
<keyword id="KW-0256">Endoplasmic reticulum</keyword>
<keyword id="KW-0275">Fatty acid biosynthesis</keyword>
<keyword id="KW-0276">Fatty acid metabolism</keyword>
<keyword id="KW-0444">Lipid biosynthesis</keyword>
<keyword id="KW-0443">Lipid metabolism</keyword>
<keyword id="KW-0472">Membrane</keyword>
<keyword id="KW-0492">Microsome</keyword>
<keyword id="KW-0560">Oxidoreductase</keyword>
<keyword id="KW-0812">Transmembrane</keyword>
<keyword id="KW-1133">Transmembrane helix</keyword>
<comment type="function">
    <text evidence="2 3 4">Fatty acid conjugase converting 18:2(9Z, 12Z) to calendic acid 18:3(8E, 10E, 12Z) (PubMed:11067856, PubMed:11161042, PubMed:12383261). Converts alpha-linolenic acid (18:3(9Z, 12Z, 15Z)) into 18:4(8E, 10E, 12Z, 15Z) (PubMed:11067856). Also has weak activity on the mono-unsaturates 16:1(9Z) and 18:1(9Z) producing two conjugated double bonds at delta(8) and delta(10) position (PubMed:11161042).</text>
</comment>
<comment type="catalytic activity">
    <reaction evidence="2 3">
        <text>a (9Z,12Z)-octadecadienoyl-containing glycerolipid + AH2 + O2 = a (8E,10E,12Z)-octadecatrienoyl-containing glycerolipid + A + 2 H2O</text>
        <dbReference type="Rhea" id="RHEA:46440"/>
        <dbReference type="ChEBI" id="CHEBI:13193"/>
        <dbReference type="ChEBI" id="CHEBI:15377"/>
        <dbReference type="ChEBI" id="CHEBI:15379"/>
        <dbReference type="ChEBI" id="CHEBI:17499"/>
        <dbReference type="ChEBI" id="CHEBI:88257"/>
        <dbReference type="ChEBI" id="CHEBI:88351"/>
        <dbReference type="EC" id="1.14.19.14"/>
    </reaction>
</comment>
<comment type="pathway">
    <text>Lipid metabolism; polyunsaturated fatty acid biosynthesis.</text>
</comment>
<comment type="subcellular location">
    <subcellularLocation>
        <location evidence="2">Microsome membrane</location>
        <topology evidence="1">Multi-pass membrane protein</topology>
    </subcellularLocation>
</comment>
<comment type="tissue specificity">
    <text evidence="2 3">Expressed exclusively in the developing seeds. Not detected in leaves or flower buds.</text>
</comment>
<comment type="domain">
    <text evidence="7">The histidine box domains may contain the active site and/or be involved in metal ion binding.</text>
</comment>
<comment type="similarity">
    <text evidence="7">Belongs to the fatty acid desaturase type 1 family.</text>
</comment>
<protein>
    <recommendedName>
        <fullName evidence="6">Fatty acid conjugase FAC2 A</fullName>
        <shortName evidence="6">CoFac2</shortName>
        <ecNumber evidence="2 3 4">1.14.19.14</ecNumber>
    </recommendedName>
    <alternativeName>
        <fullName evidence="5">CoFadX-1</fullName>
    </alternativeName>
</protein>